<accession>Q1AW83</accession>
<comment type="function">
    <text evidence="1">Carrier of the growing fatty acid chain in fatty acid biosynthesis.</text>
</comment>
<comment type="pathway">
    <text evidence="1">Lipid metabolism; fatty acid biosynthesis.</text>
</comment>
<comment type="subcellular location">
    <subcellularLocation>
        <location evidence="1">Cytoplasm</location>
    </subcellularLocation>
</comment>
<comment type="PTM">
    <text evidence="1">4'-phosphopantetheine is transferred from CoA to a specific serine of apo-ACP by AcpS. This modification is essential for activity because fatty acids are bound in thioester linkage to the sulfhydryl of the prosthetic group.</text>
</comment>
<comment type="similarity">
    <text evidence="1">Belongs to the acyl carrier protein (ACP) family.</text>
</comment>
<reference key="1">
    <citation type="submission" date="2006-06" db="EMBL/GenBank/DDBJ databases">
        <title>Complete sequence of Rubrobacter xylanophilus DSM 9941.</title>
        <authorList>
            <consortium name="US DOE Joint Genome Institute"/>
            <person name="Copeland A."/>
            <person name="Lucas S."/>
            <person name="Lapidus A."/>
            <person name="Barry K."/>
            <person name="Detter J.C."/>
            <person name="Glavina del Rio T."/>
            <person name="Hammon N."/>
            <person name="Israni S."/>
            <person name="Dalin E."/>
            <person name="Tice H."/>
            <person name="Pitluck S."/>
            <person name="Munk A.C."/>
            <person name="Brettin T."/>
            <person name="Bruce D."/>
            <person name="Han C."/>
            <person name="Tapia R."/>
            <person name="Gilna P."/>
            <person name="Schmutz J."/>
            <person name="Larimer F."/>
            <person name="Land M."/>
            <person name="Hauser L."/>
            <person name="Kyrpides N."/>
            <person name="Lykidis A."/>
            <person name="da Costa M.S."/>
            <person name="Rainey F.A."/>
            <person name="Empadinhas N."/>
            <person name="Jolivet E."/>
            <person name="Battista J.R."/>
            <person name="Richardson P."/>
        </authorList>
    </citation>
    <scope>NUCLEOTIDE SEQUENCE [LARGE SCALE GENOMIC DNA]</scope>
    <source>
        <strain>DSM 9941 / JCM 11954 / NBRC 16129 / PRD-1</strain>
    </source>
</reference>
<keyword id="KW-0963">Cytoplasm</keyword>
<keyword id="KW-0275">Fatty acid biosynthesis</keyword>
<keyword id="KW-0276">Fatty acid metabolism</keyword>
<keyword id="KW-0444">Lipid biosynthesis</keyword>
<keyword id="KW-0443">Lipid metabolism</keyword>
<keyword id="KW-0596">Phosphopantetheine</keyword>
<keyword id="KW-0597">Phosphoprotein</keyword>
<keyword id="KW-1185">Reference proteome</keyword>
<protein>
    <recommendedName>
        <fullName evidence="1">Acyl carrier protein</fullName>
        <shortName evidence="1">ACP</shortName>
    </recommendedName>
</protein>
<gene>
    <name evidence="1" type="primary">acpP</name>
    <name type="ordered locus">Rxyl_1382</name>
</gene>
<evidence type="ECO:0000255" key="1">
    <source>
        <dbReference type="HAMAP-Rule" id="MF_01217"/>
    </source>
</evidence>
<evidence type="ECO:0000255" key="2">
    <source>
        <dbReference type="PROSITE-ProRule" id="PRU00258"/>
    </source>
</evidence>
<feature type="chain" id="PRO_1000066684" description="Acyl carrier protein">
    <location>
        <begin position="1"/>
        <end position="81"/>
    </location>
</feature>
<feature type="domain" description="Carrier" evidence="2">
    <location>
        <begin position="1"/>
        <end position="79"/>
    </location>
</feature>
<feature type="modified residue" description="O-(pantetheine 4'-phosphoryl)serine" evidence="2">
    <location>
        <position position="39"/>
    </location>
</feature>
<sequence>MDREEILQKIQEITADRLGVDESEVTPEASFREDLEADSLDLVELIMELEEAFGMEIPDEEAEKITTVEEAVDYVVEHQTA</sequence>
<name>ACP_RUBXD</name>
<dbReference type="EMBL" id="CP000386">
    <property type="protein sequence ID" value="ABG04345.1"/>
    <property type="molecule type" value="Genomic_DNA"/>
</dbReference>
<dbReference type="RefSeq" id="WP_011564362.1">
    <property type="nucleotide sequence ID" value="NC_008148.1"/>
</dbReference>
<dbReference type="SMR" id="Q1AW83"/>
<dbReference type="STRING" id="266117.Rxyl_1382"/>
<dbReference type="KEGG" id="rxy:Rxyl_1382"/>
<dbReference type="eggNOG" id="COG0236">
    <property type="taxonomic scope" value="Bacteria"/>
</dbReference>
<dbReference type="HOGENOM" id="CLU_108696_5_1_11"/>
<dbReference type="OrthoDB" id="9804551at2"/>
<dbReference type="PhylomeDB" id="Q1AW83"/>
<dbReference type="UniPathway" id="UPA00094"/>
<dbReference type="Proteomes" id="UP000006637">
    <property type="component" value="Chromosome"/>
</dbReference>
<dbReference type="GO" id="GO:0005829">
    <property type="term" value="C:cytosol"/>
    <property type="evidence" value="ECO:0007669"/>
    <property type="project" value="TreeGrafter"/>
</dbReference>
<dbReference type="GO" id="GO:0016020">
    <property type="term" value="C:membrane"/>
    <property type="evidence" value="ECO:0007669"/>
    <property type="project" value="GOC"/>
</dbReference>
<dbReference type="GO" id="GO:0000035">
    <property type="term" value="F:acyl binding"/>
    <property type="evidence" value="ECO:0007669"/>
    <property type="project" value="TreeGrafter"/>
</dbReference>
<dbReference type="GO" id="GO:0000036">
    <property type="term" value="F:acyl carrier activity"/>
    <property type="evidence" value="ECO:0007669"/>
    <property type="project" value="UniProtKB-UniRule"/>
</dbReference>
<dbReference type="GO" id="GO:0009245">
    <property type="term" value="P:lipid A biosynthetic process"/>
    <property type="evidence" value="ECO:0007669"/>
    <property type="project" value="TreeGrafter"/>
</dbReference>
<dbReference type="FunFam" id="1.10.1200.10:FF:000001">
    <property type="entry name" value="Acyl carrier protein"/>
    <property type="match status" value="1"/>
</dbReference>
<dbReference type="Gene3D" id="1.10.1200.10">
    <property type="entry name" value="ACP-like"/>
    <property type="match status" value="1"/>
</dbReference>
<dbReference type="HAMAP" id="MF_01217">
    <property type="entry name" value="Acyl_carrier"/>
    <property type="match status" value="1"/>
</dbReference>
<dbReference type="InterPro" id="IPR003231">
    <property type="entry name" value="ACP"/>
</dbReference>
<dbReference type="InterPro" id="IPR036736">
    <property type="entry name" value="ACP-like_sf"/>
</dbReference>
<dbReference type="InterPro" id="IPR009081">
    <property type="entry name" value="PP-bd_ACP"/>
</dbReference>
<dbReference type="NCBIfam" id="TIGR00517">
    <property type="entry name" value="acyl_carrier"/>
    <property type="match status" value="1"/>
</dbReference>
<dbReference type="NCBIfam" id="NF002148">
    <property type="entry name" value="PRK00982.1-2"/>
    <property type="match status" value="1"/>
</dbReference>
<dbReference type="NCBIfam" id="NF002150">
    <property type="entry name" value="PRK00982.1-4"/>
    <property type="match status" value="1"/>
</dbReference>
<dbReference type="NCBIfam" id="NF002151">
    <property type="entry name" value="PRK00982.1-5"/>
    <property type="match status" value="1"/>
</dbReference>
<dbReference type="PANTHER" id="PTHR20863">
    <property type="entry name" value="ACYL CARRIER PROTEIN"/>
    <property type="match status" value="1"/>
</dbReference>
<dbReference type="PANTHER" id="PTHR20863:SF76">
    <property type="entry name" value="CARRIER DOMAIN-CONTAINING PROTEIN"/>
    <property type="match status" value="1"/>
</dbReference>
<dbReference type="Pfam" id="PF00550">
    <property type="entry name" value="PP-binding"/>
    <property type="match status" value="1"/>
</dbReference>
<dbReference type="SUPFAM" id="SSF47336">
    <property type="entry name" value="ACP-like"/>
    <property type="match status" value="1"/>
</dbReference>
<dbReference type="PROSITE" id="PS50075">
    <property type="entry name" value="CARRIER"/>
    <property type="match status" value="1"/>
</dbReference>
<proteinExistence type="inferred from homology"/>
<organism>
    <name type="scientific">Rubrobacter xylanophilus (strain DSM 9941 / JCM 11954 / NBRC 16129 / PRD-1)</name>
    <dbReference type="NCBI Taxonomy" id="266117"/>
    <lineage>
        <taxon>Bacteria</taxon>
        <taxon>Bacillati</taxon>
        <taxon>Actinomycetota</taxon>
        <taxon>Rubrobacteria</taxon>
        <taxon>Rubrobacterales</taxon>
        <taxon>Rubrobacteraceae</taxon>
        <taxon>Rubrobacter</taxon>
    </lineage>
</organism>